<reference key="1">
    <citation type="journal article" date="2002" name="Nucleic Acids Res.">
        <title>Genome sequence of Shigella flexneri 2a: insights into pathogenicity through comparison with genomes of Escherichia coli K12 and O157.</title>
        <authorList>
            <person name="Jin Q."/>
            <person name="Yuan Z."/>
            <person name="Xu J."/>
            <person name="Wang Y."/>
            <person name="Shen Y."/>
            <person name="Lu W."/>
            <person name="Wang J."/>
            <person name="Liu H."/>
            <person name="Yang J."/>
            <person name="Yang F."/>
            <person name="Zhang X."/>
            <person name="Zhang J."/>
            <person name="Yang G."/>
            <person name="Wu H."/>
            <person name="Qu D."/>
            <person name="Dong J."/>
            <person name="Sun L."/>
            <person name="Xue Y."/>
            <person name="Zhao A."/>
            <person name="Gao Y."/>
            <person name="Zhu J."/>
            <person name="Kan B."/>
            <person name="Ding K."/>
            <person name="Chen S."/>
            <person name="Cheng H."/>
            <person name="Yao Z."/>
            <person name="He B."/>
            <person name="Chen R."/>
            <person name="Ma D."/>
            <person name="Qiang B."/>
            <person name="Wen Y."/>
            <person name="Hou Y."/>
            <person name="Yu J."/>
        </authorList>
    </citation>
    <scope>NUCLEOTIDE SEQUENCE [LARGE SCALE GENOMIC DNA]</scope>
    <source>
        <strain>301 / Serotype 2a</strain>
    </source>
</reference>
<reference key="2">
    <citation type="journal article" date="2003" name="Infect. Immun.">
        <title>Complete genome sequence and comparative genomics of Shigella flexneri serotype 2a strain 2457T.</title>
        <authorList>
            <person name="Wei J."/>
            <person name="Goldberg M.B."/>
            <person name="Burland V."/>
            <person name="Venkatesan M.M."/>
            <person name="Deng W."/>
            <person name="Fournier G."/>
            <person name="Mayhew G.F."/>
            <person name="Plunkett G. III"/>
            <person name="Rose D.J."/>
            <person name="Darling A."/>
            <person name="Mau B."/>
            <person name="Perna N.T."/>
            <person name="Payne S.M."/>
            <person name="Runyen-Janecky L.J."/>
            <person name="Zhou S."/>
            <person name="Schwartz D.C."/>
            <person name="Blattner F.R."/>
        </authorList>
    </citation>
    <scope>NUCLEOTIDE SEQUENCE [LARGE SCALE GENOMIC DNA]</scope>
    <source>
        <strain>ATCC 700930 / 2457T / Serotype 2a</strain>
    </source>
</reference>
<dbReference type="EMBL" id="AE005674">
    <property type="protein sequence ID" value="AAN45674.1"/>
    <property type="molecule type" value="Genomic_DNA"/>
</dbReference>
<dbReference type="EMBL" id="AE014073">
    <property type="protein sequence ID" value="AAP19461.1"/>
    <property type="molecule type" value="Genomic_DNA"/>
</dbReference>
<dbReference type="SMR" id="Q83P53"/>
<dbReference type="STRING" id="198214.SF4256"/>
<dbReference type="PaxDb" id="198214-SF4256"/>
<dbReference type="KEGG" id="sfl:SF4256"/>
<dbReference type="KEGG" id="sfx:S4518"/>
<dbReference type="PATRIC" id="fig|198214.7.peg.5019"/>
<dbReference type="HOGENOM" id="CLU_106757_2_0_6"/>
<dbReference type="Proteomes" id="UP000001006">
    <property type="component" value="Chromosome"/>
</dbReference>
<dbReference type="Proteomes" id="UP000002673">
    <property type="component" value="Chromosome"/>
</dbReference>
<dbReference type="GO" id="GO:0005829">
    <property type="term" value="C:cytosol"/>
    <property type="evidence" value="ECO:0007669"/>
    <property type="project" value="TreeGrafter"/>
</dbReference>
<dbReference type="GO" id="GO:0043022">
    <property type="term" value="F:ribosome binding"/>
    <property type="evidence" value="ECO:0007669"/>
    <property type="project" value="UniProtKB-UniRule"/>
</dbReference>
<dbReference type="GO" id="GO:0019843">
    <property type="term" value="F:rRNA binding"/>
    <property type="evidence" value="ECO:0007669"/>
    <property type="project" value="UniProtKB-UniRule"/>
</dbReference>
<dbReference type="GO" id="GO:1902626">
    <property type="term" value="P:assembly of large subunit precursor of preribosome"/>
    <property type="evidence" value="ECO:0007669"/>
    <property type="project" value="UniProtKB-UniRule"/>
</dbReference>
<dbReference type="CDD" id="cd16331">
    <property type="entry name" value="YjgA-like"/>
    <property type="match status" value="1"/>
</dbReference>
<dbReference type="FunFam" id="1.10.60.30:FF:000001">
    <property type="entry name" value="UPF0307 protein YjgA"/>
    <property type="match status" value="1"/>
</dbReference>
<dbReference type="FunFam" id="1.10.60.30:FF:000002">
    <property type="entry name" value="UPF0307 protein YjgA"/>
    <property type="match status" value="1"/>
</dbReference>
<dbReference type="Gene3D" id="1.10.60.30">
    <property type="entry name" value="PSPTO4464-like domains"/>
    <property type="match status" value="2"/>
</dbReference>
<dbReference type="HAMAP" id="MF_00765">
    <property type="entry name" value="DarP"/>
    <property type="match status" value="1"/>
</dbReference>
<dbReference type="InterPro" id="IPR006839">
    <property type="entry name" value="DarP"/>
</dbReference>
<dbReference type="InterPro" id="IPR023153">
    <property type="entry name" value="DarP_sf"/>
</dbReference>
<dbReference type="NCBIfam" id="NF003593">
    <property type="entry name" value="PRK05255.1-1"/>
    <property type="match status" value="1"/>
</dbReference>
<dbReference type="PANTHER" id="PTHR38101">
    <property type="entry name" value="UPF0307 PROTEIN YJGA"/>
    <property type="match status" value="1"/>
</dbReference>
<dbReference type="PANTHER" id="PTHR38101:SF1">
    <property type="entry name" value="UPF0307 PROTEIN YJGA"/>
    <property type="match status" value="1"/>
</dbReference>
<dbReference type="Pfam" id="PF04751">
    <property type="entry name" value="DarP"/>
    <property type="match status" value="1"/>
</dbReference>
<dbReference type="PIRSF" id="PIRSF016183">
    <property type="entry name" value="UCP016183"/>
    <property type="match status" value="1"/>
</dbReference>
<dbReference type="SUPFAM" id="SSF158710">
    <property type="entry name" value="PSPTO4464-like"/>
    <property type="match status" value="1"/>
</dbReference>
<evidence type="ECO:0000255" key="1">
    <source>
        <dbReference type="HAMAP-Rule" id="MF_00765"/>
    </source>
</evidence>
<evidence type="ECO:0000305" key="2"/>
<proteinExistence type="inferred from homology"/>
<accession>Q83P53</accession>
<accession>Q7UAN6</accession>
<protein>
    <recommendedName>
        <fullName evidence="1">Dual-action ribosomal maturation protein DarP</fullName>
    </recommendedName>
    <alternativeName>
        <fullName evidence="1">Large ribosomal subunit assembly factor DarP</fullName>
    </alternativeName>
</protein>
<gene>
    <name evidence="1" type="primary">darP</name>
    <name type="ordered locus">SF4256</name>
    <name type="ordered locus">S4518</name>
</gene>
<sequence>MTKQPEDWLDDVPGDDIEDEDDEIIWVSKSEIKRDAEELKRLGAEIVDLGKNALYKIPLDADLRPAIELAQRIKMEGRRRQLQLIGKMLRQRDVEPIRQALDKLKNRHNQQVVLFHKLENLRDRLIDQGDDAIAEVLNLWPDADRQQLRTLIRNAKKEKEGNKPPKSARQIFQYLRELAENEG</sequence>
<name>DARP_SHIFL</name>
<feature type="chain" id="PRO_0000208230" description="Dual-action ribosomal maturation protein DarP">
    <location>
        <begin position="1"/>
        <end position="183"/>
    </location>
</feature>
<feature type="sequence conflict" description="In Ref. 2; AAP19461." evidence="2" ref="2">
    <original>Y</original>
    <variation>D</variation>
    <location>
        <position position="55"/>
    </location>
</feature>
<organism>
    <name type="scientific">Shigella flexneri</name>
    <dbReference type="NCBI Taxonomy" id="623"/>
    <lineage>
        <taxon>Bacteria</taxon>
        <taxon>Pseudomonadati</taxon>
        <taxon>Pseudomonadota</taxon>
        <taxon>Gammaproteobacteria</taxon>
        <taxon>Enterobacterales</taxon>
        <taxon>Enterobacteriaceae</taxon>
        <taxon>Shigella</taxon>
    </lineage>
</organism>
<comment type="function">
    <text evidence="1">Member of a network of 50S ribosomal subunit biogenesis factors which assembles along the 30S-50S interface, preventing incorrect 23S rRNA structures from forming. Promotes peptidyl transferase center (PTC) maturation.</text>
</comment>
<comment type="subcellular location">
    <subcellularLocation>
        <location evidence="1">Cytoplasm</location>
    </subcellularLocation>
    <text evidence="1">Associates with late stage pre-50S ribosomal subunits.</text>
</comment>
<comment type="similarity">
    <text evidence="1">Belongs to the DarP family.</text>
</comment>
<keyword id="KW-0963">Cytoplasm</keyword>
<keyword id="KW-1185">Reference proteome</keyword>
<keyword id="KW-0690">Ribosome biogenesis</keyword>
<keyword id="KW-0694">RNA-binding</keyword>
<keyword id="KW-0699">rRNA-binding</keyword>